<sequence length="339" mass="37212">MKVGILGGSGYAGAELYRLLLNHPNFNVTFISSEKYAGKPVEKMLKGFAHNGHSHNLRFNHLDDLPFDLDFVFSALPTGVLPKYVEKILEKTSLIFNVSGDFRFKDATTLQQYYPETLAIESDQILSSYYIPEFSDFDKNANIINLPGCMALASIYAAYPLVKNKLINPNIFVDVKTGSSGAGKSTKETAADRFGNFRLYRAFNHRHLPEIAMALGSSVGKVGFAAYSLDISRGIYASVYSQIKKGVTEVDVKKAYFKTYKSCKFVANLTGKQSVPMLKSTNGTNFAEVKATVHEGQCIAVVSLDNLLKGAAGQAVQAANKYYQLVEDTGLDTLAGMWP</sequence>
<organism>
    <name type="scientific">Lactiplantibacillus plantarum (strain ATCC BAA-793 / NCIMB 8826 / WCFS1)</name>
    <name type="common">Lactobacillus plantarum</name>
    <dbReference type="NCBI Taxonomy" id="220668"/>
    <lineage>
        <taxon>Bacteria</taxon>
        <taxon>Bacillati</taxon>
        <taxon>Bacillota</taxon>
        <taxon>Bacilli</taxon>
        <taxon>Lactobacillales</taxon>
        <taxon>Lactobacillaceae</taxon>
        <taxon>Lactiplantibacillus</taxon>
    </lineage>
</organism>
<protein>
    <recommendedName>
        <fullName evidence="1">N-acetyl-gamma-glutamyl-phosphate reductase 1</fullName>
        <shortName evidence="1">AGPR 1</shortName>
        <ecNumber evidence="1">1.2.1.38</ecNumber>
    </recommendedName>
    <alternativeName>
        <fullName evidence="1">N-acetyl-glutamate semialdehyde dehydrogenase 1</fullName>
        <shortName evidence="1">NAGSA dehydrogenase 1</shortName>
    </alternativeName>
</protein>
<comment type="function">
    <text evidence="1">Catalyzes the NADPH-dependent reduction of N-acetyl-5-glutamyl phosphate to yield N-acetyl-L-glutamate 5-semialdehyde.</text>
</comment>
<comment type="catalytic activity">
    <reaction evidence="1">
        <text>N-acetyl-L-glutamate 5-semialdehyde + phosphate + NADP(+) = N-acetyl-L-glutamyl 5-phosphate + NADPH + H(+)</text>
        <dbReference type="Rhea" id="RHEA:21588"/>
        <dbReference type="ChEBI" id="CHEBI:15378"/>
        <dbReference type="ChEBI" id="CHEBI:29123"/>
        <dbReference type="ChEBI" id="CHEBI:43474"/>
        <dbReference type="ChEBI" id="CHEBI:57783"/>
        <dbReference type="ChEBI" id="CHEBI:57936"/>
        <dbReference type="ChEBI" id="CHEBI:58349"/>
        <dbReference type="EC" id="1.2.1.38"/>
    </reaction>
</comment>
<comment type="pathway">
    <text evidence="1">Amino-acid biosynthesis; L-arginine biosynthesis; N(2)-acetyl-L-ornithine from L-glutamate: step 3/4.</text>
</comment>
<comment type="subcellular location">
    <subcellularLocation>
        <location evidence="1">Cytoplasm</location>
    </subcellularLocation>
</comment>
<comment type="similarity">
    <text evidence="1">Belongs to the NAGSA dehydrogenase family. Type 1 subfamily.</text>
</comment>
<keyword id="KW-0028">Amino-acid biosynthesis</keyword>
<keyword id="KW-0055">Arginine biosynthesis</keyword>
<keyword id="KW-0963">Cytoplasm</keyword>
<keyword id="KW-0521">NADP</keyword>
<keyword id="KW-0560">Oxidoreductase</keyword>
<keyword id="KW-1185">Reference proteome</keyword>
<reference key="1">
    <citation type="journal article" date="2003" name="Proc. Natl. Acad. Sci. U.S.A.">
        <title>Complete genome sequence of Lactobacillus plantarum WCFS1.</title>
        <authorList>
            <person name="Kleerebezem M."/>
            <person name="Boekhorst J."/>
            <person name="van Kranenburg R."/>
            <person name="Molenaar D."/>
            <person name="Kuipers O.P."/>
            <person name="Leer R."/>
            <person name="Tarchini R."/>
            <person name="Peters S.A."/>
            <person name="Sandbrink H.M."/>
            <person name="Fiers M.W.E.J."/>
            <person name="Stiekema W."/>
            <person name="Klein Lankhorst R.M."/>
            <person name="Bron P.A."/>
            <person name="Hoffer S.M."/>
            <person name="Nierop Groot M.N."/>
            <person name="Kerkhoven R."/>
            <person name="De Vries M."/>
            <person name="Ursing B."/>
            <person name="De Vos W.M."/>
            <person name="Siezen R.J."/>
        </authorList>
    </citation>
    <scope>NUCLEOTIDE SEQUENCE [LARGE SCALE GENOMIC DNA]</scope>
    <source>
        <strain>ATCC BAA-793 / NCIMB 8826 / WCFS1</strain>
    </source>
</reference>
<reference key="2">
    <citation type="journal article" date="2012" name="J. Bacteriol.">
        <title>Complete resequencing and reannotation of the Lactobacillus plantarum WCFS1 genome.</title>
        <authorList>
            <person name="Siezen R.J."/>
            <person name="Francke C."/>
            <person name="Renckens B."/>
            <person name="Boekhorst J."/>
            <person name="Wels M."/>
            <person name="Kleerebezem M."/>
            <person name="van Hijum S.A."/>
        </authorList>
    </citation>
    <scope>NUCLEOTIDE SEQUENCE [LARGE SCALE GENOMIC DNA]</scope>
    <scope>GENOME REANNOTATION</scope>
    <source>
        <strain>ATCC BAA-793 / NCIMB 8826 / WCFS1</strain>
    </source>
</reference>
<feature type="chain" id="PRO_0000112412" description="N-acetyl-gamma-glutamyl-phosphate reductase 1">
    <location>
        <begin position="1"/>
        <end position="339"/>
    </location>
</feature>
<feature type="active site" evidence="1">
    <location>
        <position position="149"/>
    </location>
</feature>
<dbReference type="EC" id="1.2.1.38" evidence="1"/>
<dbReference type="EMBL" id="AL935263">
    <property type="protein sequence ID" value="CCC77984.1"/>
    <property type="molecule type" value="Genomic_DNA"/>
</dbReference>
<dbReference type="RefSeq" id="WP_011101026.1">
    <property type="nucleotide sequence ID" value="NC_004567.2"/>
</dbReference>
<dbReference type="RefSeq" id="YP_004888498.1">
    <property type="nucleotide sequence ID" value="NC_004567.2"/>
</dbReference>
<dbReference type="SMR" id="P59391"/>
<dbReference type="STRING" id="220668.lp_0487"/>
<dbReference type="EnsemblBacteria" id="CCC77984">
    <property type="protein sequence ID" value="CCC77984"/>
    <property type="gene ID" value="lp_0487"/>
</dbReference>
<dbReference type="KEGG" id="lpl:lp_0487"/>
<dbReference type="PATRIC" id="fig|220668.9.peg.401"/>
<dbReference type="eggNOG" id="COG0002">
    <property type="taxonomic scope" value="Bacteria"/>
</dbReference>
<dbReference type="HOGENOM" id="CLU_006384_0_1_9"/>
<dbReference type="OrthoDB" id="9801289at2"/>
<dbReference type="PhylomeDB" id="P59391"/>
<dbReference type="UniPathway" id="UPA00068">
    <property type="reaction ID" value="UER00108"/>
</dbReference>
<dbReference type="Proteomes" id="UP000000432">
    <property type="component" value="Chromosome"/>
</dbReference>
<dbReference type="GO" id="GO:0005737">
    <property type="term" value="C:cytoplasm"/>
    <property type="evidence" value="ECO:0007669"/>
    <property type="project" value="UniProtKB-SubCell"/>
</dbReference>
<dbReference type="GO" id="GO:0003942">
    <property type="term" value="F:N-acetyl-gamma-glutamyl-phosphate reductase activity"/>
    <property type="evidence" value="ECO:0007669"/>
    <property type="project" value="UniProtKB-UniRule"/>
</dbReference>
<dbReference type="GO" id="GO:0051287">
    <property type="term" value="F:NAD binding"/>
    <property type="evidence" value="ECO:0007669"/>
    <property type="project" value="InterPro"/>
</dbReference>
<dbReference type="GO" id="GO:0070401">
    <property type="term" value="F:NADP+ binding"/>
    <property type="evidence" value="ECO:0007669"/>
    <property type="project" value="InterPro"/>
</dbReference>
<dbReference type="GO" id="GO:0006526">
    <property type="term" value="P:L-arginine biosynthetic process"/>
    <property type="evidence" value="ECO:0007669"/>
    <property type="project" value="UniProtKB-UniRule"/>
</dbReference>
<dbReference type="CDD" id="cd23939">
    <property type="entry name" value="AGPR_1_C_LysY"/>
    <property type="match status" value="1"/>
</dbReference>
<dbReference type="CDD" id="cd17895">
    <property type="entry name" value="AGPR_1_N"/>
    <property type="match status" value="1"/>
</dbReference>
<dbReference type="Gene3D" id="3.30.360.10">
    <property type="entry name" value="Dihydrodipicolinate Reductase, domain 2"/>
    <property type="match status" value="1"/>
</dbReference>
<dbReference type="Gene3D" id="3.40.50.720">
    <property type="entry name" value="NAD(P)-binding Rossmann-like Domain"/>
    <property type="match status" value="1"/>
</dbReference>
<dbReference type="HAMAP" id="MF_00150">
    <property type="entry name" value="ArgC_type1"/>
    <property type="match status" value="1"/>
</dbReference>
<dbReference type="InterPro" id="IPR000706">
    <property type="entry name" value="AGPR_type-1"/>
</dbReference>
<dbReference type="InterPro" id="IPR036291">
    <property type="entry name" value="NAD(P)-bd_dom_sf"/>
</dbReference>
<dbReference type="InterPro" id="IPR050085">
    <property type="entry name" value="NAGSA_dehydrogenase"/>
</dbReference>
<dbReference type="InterPro" id="IPR000534">
    <property type="entry name" value="Semialdehyde_DH_NAD-bd"/>
</dbReference>
<dbReference type="NCBIfam" id="TIGR01850">
    <property type="entry name" value="argC"/>
    <property type="match status" value="1"/>
</dbReference>
<dbReference type="PANTHER" id="PTHR32338:SF10">
    <property type="entry name" value="N-ACETYL-GAMMA-GLUTAMYL-PHOSPHATE REDUCTASE, CHLOROPLASTIC-RELATED"/>
    <property type="match status" value="1"/>
</dbReference>
<dbReference type="PANTHER" id="PTHR32338">
    <property type="entry name" value="N-ACETYL-GAMMA-GLUTAMYL-PHOSPHATE REDUCTASE, CHLOROPLASTIC-RELATED-RELATED"/>
    <property type="match status" value="1"/>
</dbReference>
<dbReference type="Pfam" id="PF01118">
    <property type="entry name" value="Semialdhyde_dh"/>
    <property type="match status" value="1"/>
</dbReference>
<dbReference type="Pfam" id="PF22698">
    <property type="entry name" value="Semialdhyde_dhC_1"/>
    <property type="match status" value="1"/>
</dbReference>
<dbReference type="SMART" id="SM00859">
    <property type="entry name" value="Semialdhyde_dh"/>
    <property type="match status" value="1"/>
</dbReference>
<dbReference type="SUPFAM" id="SSF55347">
    <property type="entry name" value="Glyceraldehyde-3-phosphate dehydrogenase-like, C-terminal domain"/>
    <property type="match status" value="1"/>
</dbReference>
<dbReference type="SUPFAM" id="SSF51735">
    <property type="entry name" value="NAD(P)-binding Rossmann-fold domains"/>
    <property type="match status" value="1"/>
</dbReference>
<proteinExistence type="inferred from homology"/>
<name>ARGC1_LACPL</name>
<evidence type="ECO:0000255" key="1">
    <source>
        <dbReference type="HAMAP-Rule" id="MF_00150"/>
    </source>
</evidence>
<gene>
    <name evidence="1" type="primary">argC1</name>
    <name type="ordered locus">lp_0487</name>
</gene>
<accession>P59391</accession>
<accession>F9UKW9</accession>